<organism>
    <name type="scientific">Escherichia coli O7:K1 (strain IAI39 / ExPEC)</name>
    <dbReference type="NCBI Taxonomy" id="585057"/>
    <lineage>
        <taxon>Bacteria</taxon>
        <taxon>Pseudomonadati</taxon>
        <taxon>Pseudomonadota</taxon>
        <taxon>Gammaproteobacteria</taxon>
        <taxon>Enterobacterales</taxon>
        <taxon>Enterobacteriaceae</taxon>
        <taxon>Escherichia</taxon>
    </lineage>
</organism>
<keyword id="KW-0963">Cytoplasm</keyword>
<keyword id="KW-0489">Methyltransferase</keyword>
<keyword id="KW-0698">rRNA processing</keyword>
<keyword id="KW-0949">S-adenosyl-L-methionine</keyword>
<keyword id="KW-0808">Transferase</keyword>
<comment type="function">
    <text evidence="1">Specifically methylates the uridine in position 2552 of 23S rRNA at the 2'-O position of the ribose in the fully assembled 50S ribosomal subunit.</text>
</comment>
<comment type="catalytic activity">
    <reaction evidence="1">
        <text>uridine(2552) in 23S rRNA + S-adenosyl-L-methionine = 2'-O-methyluridine(2552) in 23S rRNA + S-adenosyl-L-homocysteine + H(+)</text>
        <dbReference type="Rhea" id="RHEA:42720"/>
        <dbReference type="Rhea" id="RHEA-COMP:10202"/>
        <dbReference type="Rhea" id="RHEA-COMP:10203"/>
        <dbReference type="ChEBI" id="CHEBI:15378"/>
        <dbReference type="ChEBI" id="CHEBI:57856"/>
        <dbReference type="ChEBI" id="CHEBI:59789"/>
        <dbReference type="ChEBI" id="CHEBI:65315"/>
        <dbReference type="ChEBI" id="CHEBI:74478"/>
        <dbReference type="EC" id="2.1.1.166"/>
    </reaction>
</comment>
<comment type="subcellular location">
    <subcellularLocation>
        <location evidence="1">Cytoplasm</location>
    </subcellularLocation>
</comment>
<comment type="similarity">
    <text evidence="1">Belongs to the class I-like SAM-binding methyltransferase superfamily. RNA methyltransferase RlmE family.</text>
</comment>
<proteinExistence type="inferred from homology"/>
<gene>
    <name evidence="1" type="primary">rlmE</name>
    <name evidence="1" type="synonym">ftsJ</name>
    <name evidence="1" type="synonym">rrmJ</name>
    <name type="ordered locus">ECIAI39_3674</name>
</gene>
<sequence>MTGKKRSASSSRWLQEHFSDKYVQQAQKKGLRSRAWFKLDEIQQSDKLFKPGMTVVDLGAAPGGWSQYVVTQIGGKGRIIACDLLPMDPIVGVDFLQGDFRDELVMKALLERVGDSKVQVVMSDMAPNMSGTPAVDIPRAMYLVELALEMCRDVLAPGGSFVVKVFQGEGFDEYLREIRSLFTKVKVRKPDSSRARSREVYIVATGRKP</sequence>
<reference key="1">
    <citation type="journal article" date="2009" name="PLoS Genet.">
        <title>Organised genome dynamics in the Escherichia coli species results in highly diverse adaptive paths.</title>
        <authorList>
            <person name="Touchon M."/>
            <person name="Hoede C."/>
            <person name="Tenaillon O."/>
            <person name="Barbe V."/>
            <person name="Baeriswyl S."/>
            <person name="Bidet P."/>
            <person name="Bingen E."/>
            <person name="Bonacorsi S."/>
            <person name="Bouchier C."/>
            <person name="Bouvet O."/>
            <person name="Calteau A."/>
            <person name="Chiapello H."/>
            <person name="Clermont O."/>
            <person name="Cruveiller S."/>
            <person name="Danchin A."/>
            <person name="Diard M."/>
            <person name="Dossat C."/>
            <person name="Karoui M.E."/>
            <person name="Frapy E."/>
            <person name="Garry L."/>
            <person name="Ghigo J.M."/>
            <person name="Gilles A.M."/>
            <person name="Johnson J."/>
            <person name="Le Bouguenec C."/>
            <person name="Lescat M."/>
            <person name="Mangenot S."/>
            <person name="Martinez-Jehanne V."/>
            <person name="Matic I."/>
            <person name="Nassif X."/>
            <person name="Oztas S."/>
            <person name="Petit M.A."/>
            <person name="Pichon C."/>
            <person name="Rouy Z."/>
            <person name="Ruf C.S."/>
            <person name="Schneider D."/>
            <person name="Tourret J."/>
            <person name="Vacherie B."/>
            <person name="Vallenet D."/>
            <person name="Medigue C."/>
            <person name="Rocha E.P.C."/>
            <person name="Denamur E."/>
        </authorList>
    </citation>
    <scope>NUCLEOTIDE SEQUENCE [LARGE SCALE GENOMIC DNA]</scope>
    <source>
        <strain>IAI39 / ExPEC</strain>
    </source>
</reference>
<name>RLME_ECO7I</name>
<feature type="chain" id="PRO_1000194997" description="Ribosomal RNA large subunit methyltransferase E">
    <location>
        <begin position="1"/>
        <end position="209"/>
    </location>
</feature>
<feature type="active site" description="Proton acceptor" evidence="1">
    <location>
        <position position="164"/>
    </location>
</feature>
<feature type="binding site" evidence="1">
    <location>
        <position position="63"/>
    </location>
    <ligand>
        <name>S-adenosyl-L-methionine</name>
        <dbReference type="ChEBI" id="CHEBI:59789"/>
    </ligand>
</feature>
<feature type="binding site" evidence="1">
    <location>
        <position position="65"/>
    </location>
    <ligand>
        <name>S-adenosyl-L-methionine</name>
        <dbReference type="ChEBI" id="CHEBI:59789"/>
    </ligand>
</feature>
<feature type="binding site" evidence="1">
    <location>
        <position position="83"/>
    </location>
    <ligand>
        <name>S-adenosyl-L-methionine</name>
        <dbReference type="ChEBI" id="CHEBI:59789"/>
    </ligand>
</feature>
<feature type="binding site" evidence="1">
    <location>
        <position position="99"/>
    </location>
    <ligand>
        <name>S-adenosyl-L-methionine</name>
        <dbReference type="ChEBI" id="CHEBI:59789"/>
    </ligand>
</feature>
<feature type="binding site" evidence="1">
    <location>
        <position position="124"/>
    </location>
    <ligand>
        <name>S-adenosyl-L-methionine</name>
        <dbReference type="ChEBI" id="CHEBI:59789"/>
    </ligand>
</feature>
<dbReference type="EC" id="2.1.1.166" evidence="1"/>
<dbReference type="EMBL" id="CU928164">
    <property type="protein sequence ID" value="CAR19790.1"/>
    <property type="molecule type" value="Genomic_DNA"/>
</dbReference>
<dbReference type="RefSeq" id="WP_000145975.1">
    <property type="nucleotide sequence ID" value="NC_011750.1"/>
</dbReference>
<dbReference type="RefSeq" id="YP_002409577.1">
    <property type="nucleotide sequence ID" value="NC_011750.1"/>
</dbReference>
<dbReference type="SMR" id="B7NKP6"/>
<dbReference type="STRING" id="585057.ECIAI39_3674"/>
<dbReference type="GeneID" id="93778802"/>
<dbReference type="KEGG" id="ect:ECIAI39_3674"/>
<dbReference type="PATRIC" id="fig|585057.6.peg.3807"/>
<dbReference type="HOGENOM" id="CLU_009422_4_0_6"/>
<dbReference type="Proteomes" id="UP000000749">
    <property type="component" value="Chromosome"/>
</dbReference>
<dbReference type="GO" id="GO:0005737">
    <property type="term" value="C:cytoplasm"/>
    <property type="evidence" value="ECO:0007669"/>
    <property type="project" value="UniProtKB-SubCell"/>
</dbReference>
<dbReference type="GO" id="GO:0008650">
    <property type="term" value="F:rRNA (uridine-2'-O-)-methyltransferase activity"/>
    <property type="evidence" value="ECO:0007669"/>
    <property type="project" value="UniProtKB-UniRule"/>
</dbReference>
<dbReference type="CDD" id="cd02440">
    <property type="entry name" value="AdoMet_MTases"/>
    <property type="match status" value="1"/>
</dbReference>
<dbReference type="FunFam" id="3.40.50.150:FF:000005">
    <property type="entry name" value="Ribosomal RNA large subunit methyltransferase E"/>
    <property type="match status" value="1"/>
</dbReference>
<dbReference type="Gene3D" id="3.40.50.150">
    <property type="entry name" value="Vaccinia Virus protein VP39"/>
    <property type="match status" value="1"/>
</dbReference>
<dbReference type="HAMAP" id="MF_01547">
    <property type="entry name" value="RNA_methyltr_E"/>
    <property type="match status" value="1"/>
</dbReference>
<dbReference type="InterPro" id="IPR050082">
    <property type="entry name" value="RNA_methyltr_RlmE"/>
</dbReference>
<dbReference type="InterPro" id="IPR002877">
    <property type="entry name" value="RNA_MeTrfase_FtsJ_dom"/>
</dbReference>
<dbReference type="InterPro" id="IPR015507">
    <property type="entry name" value="rRNA-MeTfrase_E"/>
</dbReference>
<dbReference type="InterPro" id="IPR004512">
    <property type="entry name" value="rRNA_MeTrfase_gammaproteobac"/>
</dbReference>
<dbReference type="InterPro" id="IPR029063">
    <property type="entry name" value="SAM-dependent_MTases_sf"/>
</dbReference>
<dbReference type="NCBIfam" id="NF008390">
    <property type="entry name" value="PRK11188.1"/>
    <property type="match status" value="1"/>
</dbReference>
<dbReference type="NCBIfam" id="TIGR00438">
    <property type="entry name" value="rrmJ"/>
    <property type="match status" value="1"/>
</dbReference>
<dbReference type="PANTHER" id="PTHR10920">
    <property type="entry name" value="RIBOSOMAL RNA METHYLTRANSFERASE"/>
    <property type="match status" value="1"/>
</dbReference>
<dbReference type="PANTHER" id="PTHR10920:SF18">
    <property type="entry name" value="RRNA METHYLTRANSFERASE 2, MITOCHONDRIAL"/>
    <property type="match status" value="1"/>
</dbReference>
<dbReference type="Pfam" id="PF01728">
    <property type="entry name" value="FtsJ"/>
    <property type="match status" value="1"/>
</dbReference>
<dbReference type="PIRSF" id="PIRSF005461">
    <property type="entry name" value="23S_rRNA_mtase"/>
    <property type="match status" value="1"/>
</dbReference>
<dbReference type="SUPFAM" id="SSF53335">
    <property type="entry name" value="S-adenosyl-L-methionine-dependent methyltransferases"/>
    <property type="match status" value="1"/>
</dbReference>
<evidence type="ECO:0000255" key="1">
    <source>
        <dbReference type="HAMAP-Rule" id="MF_01547"/>
    </source>
</evidence>
<accession>B7NKP6</accession>
<protein>
    <recommendedName>
        <fullName evidence="1">Ribosomal RNA large subunit methyltransferase E</fullName>
        <ecNumber evidence="1">2.1.1.166</ecNumber>
    </recommendedName>
    <alternativeName>
        <fullName evidence="1">23S rRNA Um2552 methyltransferase</fullName>
    </alternativeName>
    <alternativeName>
        <fullName evidence="1">rRNA (uridine-2'-O-)-methyltransferase</fullName>
    </alternativeName>
</protein>